<organism>
    <name type="scientific">Archaeoglobus fulgidus (strain ATCC 49558 / DSM 4304 / JCM 9628 / NBRC 100126 / VC-16)</name>
    <dbReference type="NCBI Taxonomy" id="224325"/>
    <lineage>
        <taxon>Archaea</taxon>
        <taxon>Methanobacteriati</taxon>
        <taxon>Methanobacteriota</taxon>
        <taxon>Archaeoglobi</taxon>
        <taxon>Archaeoglobales</taxon>
        <taxon>Archaeoglobaceae</taxon>
        <taxon>Archaeoglobus</taxon>
    </lineage>
</organism>
<feature type="chain" id="PRO_0000156044" description="Endoribonuclease Nob1">
    <location>
        <begin position="1"/>
        <end position="166"/>
    </location>
</feature>
<feature type="domain" description="PINc" evidence="3">
    <location>
        <begin position="5"/>
        <end position="106"/>
    </location>
</feature>
<feature type="region of interest" description="Flexible linker" evidence="1">
    <location>
        <begin position="122"/>
        <end position="127"/>
    </location>
</feature>
<feature type="region of interest" description="Zinc ribbon" evidence="1">
    <location>
        <begin position="128"/>
        <end position="159"/>
    </location>
</feature>
<feature type="binding site" evidence="2">
    <location>
        <position position="10"/>
    </location>
    <ligand>
        <name>Mn(2+)</name>
        <dbReference type="ChEBI" id="CHEBI:29035"/>
    </ligand>
</feature>
<feature type="binding site" evidence="2">
    <location>
        <position position="101"/>
    </location>
    <ligand>
        <name>Mn(2+)</name>
        <dbReference type="ChEBI" id="CHEBI:29035"/>
    </ligand>
</feature>
<feature type="binding site" evidence="1">
    <location>
        <position position="133"/>
    </location>
    <ligand>
        <name>Zn(2+)</name>
        <dbReference type="ChEBI" id="CHEBI:29105"/>
    </ligand>
</feature>
<feature type="binding site" evidence="1">
    <location>
        <position position="136"/>
    </location>
    <ligand>
        <name>Zn(2+)</name>
        <dbReference type="ChEBI" id="CHEBI:29105"/>
    </ligand>
</feature>
<feature type="binding site" evidence="1">
    <location>
        <position position="145"/>
    </location>
    <ligand>
        <name>Zn(2+)</name>
        <dbReference type="ChEBI" id="CHEBI:29105"/>
    </ligand>
</feature>
<feature type="binding site" evidence="1">
    <location>
        <position position="148"/>
    </location>
    <ligand>
        <name>Zn(2+)</name>
        <dbReference type="ChEBI" id="CHEBI:29105"/>
    </ligand>
</feature>
<sequence length="166" mass="18639">MKCVEVHVIDSSAIFQRKAVYRNMVTVPEVVAEILDEASALYFSVKNFRVEEASPESVEEVKEAARKTGDIHKLSDTDIKVLAKALDEIKKGNEVVLVTDDYAIQNVAMSLGIRFDGILHRQISKEFKWVKVCRGCGRRIESEICPVCGSEAIIRRVKNDKNRNSG</sequence>
<evidence type="ECO:0000250" key="1"/>
<evidence type="ECO:0000255" key="2"/>
<evidence type="ECO:0000255" key="3">
    <source>
        <dbReference type="HAMAP-Rule" id="MF_00265"/>
    </source>
</evidence>
<evidence type="ECO:0000305" key="4"/>
<keyword id="KW-0255">Endonuclease</keyword>
<keyword id="KW-0378">Hydrolase</keyword>
<keyword id="KW-0464">Manganese</keyword>
<keyword id="KW-0479">Metal-binding</keyword>
<keyword id="KW-0540">Nuclease</keyword>
<keyword id="KW-1185">Reference proteome</keyword>
<keyword id="KW-0690">Ribosome biogenesis</keyword>
<keyword id="KW-0694">RNA-binding</keyword>
<keyword id="KW-0699">rRNA-binding</keyword>
<keyword id="KW-1277">Toxin-antitoxin system</keyword>
<keyword id="KW-0862">Zinc</keyword>
<comment type="function">
    <text evidence="1">Toxic component of a type II toxin-antitoxin (TA) system. Processes pre-16S-rRNA at its 3' end (the D-site) to yield the mature 3' end (By similarity).</text>
</comment>
<comment type="cofactor">
    <cofactor evidence="4">
        <name>Mn(2+)</name>
        <dbReference type="ChEBI" id="CHEBI:29035"/>
    </cofactor>
</comment>
<comment type="cofactor">
    <cofactor evidence="1">
        <name>Zn(2+)</name>
        <dbReference type="ChEBI" id="CHEBI:29105"/>
    </cofactor>
    <text evidence="1">Binds 1 zinc ion per subunit.</text>
</comment>
<comment type="domain">
    <text evidence="1">Has 2 structurally independent domains; the N-terminal PINc domain which binds Mn(2+), rRNA substrate and probably has endoribonuclease activity, and the C-terminal zinc ribbon domain which also binds rRNA substrate.</text>
</comment>
<comment type="similarity">
    <text evidence="3">Belongs to the PINc/VapC protein family.</text>
</comment>
<name>NOB1_ARCFU</name>
<protein>
    <recommendedName>
        <fullName>Endoribonuclease Nob1</fullName>
        <shortName>RNase Nob1</shortName>
        <ecNumber evidence="3">3.1.-.-</ecNumber>
    </recommendedName>
    <alternativeName>
        <fullName>Endonuclease VapC8</fullName>
    </alternativeName>
    <alternativeName>
        <fullName evidence="3">Putative toxin VapC8</fullName>
    </alternativeName>
</protein>
<proteinExistence type="inferred from homology"/>
<dbReference type="EC" id="3.1.-.-" evidence="3"/>
<dbReference type="EMBL" id="AE000782">
    <property type="protein sequence ID" value="AAB90852.1"/>
    <property type="molecule type" value="Genomic_DNA"/>
</dbReference>
<dbReference type="PIR" id="A69298">
    <property type="entry name" value="A69298"/>
</dbReference>
<dbReference type="RefSeq" id="WP_010877892.1">
    <property type="nucleotide sequence ID" value="NC_000917.1"/>
</dbReference>
<dbReference type="SMR" id="O29862"/>
<dbReference type="STRING" id="224325.AF_0385"/>
<dbReference type="PaxDb" id="224325-AF_0385"/>
<dbReference type="EnsemblBacteria" id="AAB90852">
    <property type="protein sequence ID" value="AAB90852"/>
    <property type="gene ID" value="AF_0385"/>
</dbReference>
<dbReference type="GeneID" id="24793923"/>
<dbReference type="KEGG" id="afu:AF_0385"/>
<dbReference type="eggNOG" id="arCOG00721">
    <property type="taxonomic scope" value="Archaea"/>
</dbReference>
<dbReference type="HOGENOM" id="CLU_109674_1_0_2"/>
<dbReference type="OrthoDB" id="27944at2157"/>
<dbReference type="PhylomeDB" id="O29862"/>
<dbReference type="Proteomes" id="UP000002199">
    <property type="component" value="Chromosome"/>
</dbReference>
<dbReference type="GO" id="GO:0030688">
    <property type="term" value="C:preribosome, small subunit precursor"/>
    <property type="evidence" value="ECO:0007669"/>
    <property type="project" value="TreeGrafter"/>
</dbReference>
<dbReference type="GO" id="GO:0000287">
    <property type="term" value="F:magnesium ion binding"/>
    <property type="evidence" value="ECO:0007669"/>
    <property type="project" value="UniProtKB-UniRule"/>
</dbReference>
<dbReference type="GO" id="GO:0004521">
    <property type="term" value="F:RNA endonuclease activity"/>
    <property type="evidence" value="ECO:0007669"/>
    <property type="project" value="TreeGrafter"/>
</dbReference>
<dbReference type="GO" id="GO:0019843">
    <property type="term" value="F:rRNA binding"/>
    <property type="evidence" value="ECO:0007669"/>
    <property type="project" value="UniProtKB-KW"/>
</dbReference>
<dbReference type="GO" id="GO:0030490">
    <property type="term" value="P:maturation of SSU-rRNA"/>
    <property type="evidence" value="ECO:0007669"/>
    <property type="project" value="TreeGrafter"/>
</dbReference>
<dbReference type="CDD" id="cd09876">
    <property type="entry name" value="PIN_Nob1-like"/>
    <property type="match status" value="1"/>
</dbReference>
<dbReference type="Gene3D" id="2.20.28.10">
    <property type="match status" value="1"/>
</dbReference>
<dbReference type="Gene3D" id="3.40.50.1010">
    <property type="entry name" value="5'-nuclease"/>
    <property type="match status" value="1"/>
</dbReference>
<dbReference type="HAMAP" id="MF_00265">
    <property type="entry name" value="VapC_Nob1"/>
    <property type="match status" value="1"/>
</dbReference>
<dbReference type="InterPro" id="IPR039907">
    <property type="entry name" value="NOB1"/>
</dbReference>
<dbReference type="InterPro" id="IPR033411">
    <property type="entry name" value="Ribonuclease_PIN"/>
</dbReference>
<dbReference type="InterPro" id="IPR022907">
    <property type="entry name" value="VapC_family"/>
</dbReference>
<dbReference type="PANTHER" id="PTHR12814">
    <property type="entry name" value="RNA-BINDING PROTEIN NOB1"/>
    <property type="match status" value="1"/>
</dbReference>
<dbReference type="PANTHER" id="PTHR12814:SF2">
    <property type="entry name" value="RNA-BINDING PROTEIN NOB1"/>
    <property type="match status" value="1"/>
</dbReference>
<dbReference type="Pfam" id="PF17146">
    <property type="entry name" value="PIN_6"/>
    <property type="match status" value="1"/>
</dbReference>
<gene>
    <name type="primary">nob1</name>
    <name type="synonym">vapC8</name>
    <name type="ordered locus">AF_0385</name>
</gene>
<reference key="1">
    <citation type="journal article" date="1997" name="Nature">
        <title>The complete genome sequence of the hyperthermophilic, sulphate-reducing archaeon Archaeoglobus fulgidus.</title>
        <authorList>
            <person name="Klenk H.-P."/>
            <person name="Clayton R.A."/>
            <person name="Tomb J.-F."/>
            <person name="White O."/>
            <person name="Nelson K.E."/>
            <person name="Ketchum K.A."/>
            <person name="Dodson R.J."/>
            <person name="Gwinn M.L."/>
            <person name="Hickey E.K."/>
            <person name="Peterson J.D."/>
            <person name="Richardson D.L."/>
            <person name="Kerlavage A.R."/>
            <person name="Graham D.E."/>
            <person name="Kyrpides N.C."/>
            <person name="Fleischmann R.D."/>
            <person name="Quackenbush J."/>
            <person name="Lee N.H."/>
            <person name="Sutton G.G."/>
            <person name="Gill S.R."/>
            <person name="Kirkness E.F."/>
            <person name="Dougherty B.A."/>
            <person name="McKenney K."/>
            <person name="Adams M.D."/>
            <person name="Loftus B.J."/>
            <person name="Peterson S.N."/>
            <person name="Reich C.I."/>
            <person name="McNeil L.K."/>
            <person name="Badger J.H."/>
            <person name="Glodek A."/>
            <person name="Zhou L."/>
            <person name="Overbeek R."/>
            <person name="Gocayne J.D."/>
            <person name="Weidman J.F."/>
            <person name="McDonald L.A."/>
            <person name="Utterback T.R."/>
            <person name="Cotton M.D."/>
            <person name="Spriggs T."/>
            <person name="Artiach P."/>
            <person name="Kaine B.P."/>
            <person name="Sykes S.M."/>
            <person name="Sadow P.W."/>
            <person name="D'Andrea K.P."/>
            <person name="Bowman C."/>
            <person name="Fujii C."/>
            <person name="Garland S.A."/>
            <person name="Mason T.M."/>
            <person name="Olsen G.J."/>
            <person name="Fraser C.M."/>
            <person name="Smith H.O."/>
            <person name="Woese C.R."/>
            <person name="Venter J.C."/>
        </authorList>
    </citation>
    <scope>NUCLEOTIDE SEQUENCE [LARGE SCALE GENOMIC DNA]</scope>
    <source>
        <strain>ATCC 49558 / DSM 4304 / JCM 9628 / NBRC 100126 / VC-16</strain>
    </source>
</reference>
<reference key="2">
    <citation type="journal article" date="2005" name="Nucleic Acids Res.">
        <title>Toxin-antitoxin loci are highly abundant in free-living but lost from host-associated prokaryotes.</title>
        <authorList>
            <person name="Pandey D.P."/>
            <person name="Gerdes K."/>
        </authorList>
    </citation>
    <scope>POSSIBLE FUNCTION</scope>
    <source>
        <strain>ATCC 49558 / DSM 4304 / JCM 9628 / NBRC 100126 / VC-16</strain>
    </source>
</reference>
<accession>O29862</accession>